<organism>
    <name type="scientific">Candida albicans (strain SC5314 / ATCC MYA-2876)</name>
    <name type="common">Yeast</name>
    <dbReference type="NCBI Taxonomy" id="237561"/>
    <lineage>
        <taxon>Eukaryota</taxon>
        <taxon>Fungi</taxon>
        <taxon>Dikarya</taxon>
        <taxon>Ascomycota</taxon>
        <taxon>Saccharomycotina</taxon>
        <taxon>Pichiomycetes</taxon>
        <taxon>Debaryomycetaceae</taxon>
        <taxon>Candida/Lodderomyces clade</taxon>
        <taxon>Candida</taxon>
    </lineage>
</organism>
<gene>
    <name type="primary">PGA42</name>
    <name type="ordered locus">CAALFM_C406300CA</name>
    <name type="ORF">CaO19.10425</name>
    <name type="ORF">CaO19.2907</name>
</gene>
<sequence length="227" mass="25141">MKFIILLFALIHITVAANRALIIDYSYYGCNLDCYIASNQENTCGAHDDDVSDQQYHACLCMNYDYFTNLMNCNCFDSNVYYVSSSICSMATASSEFETYDGAPSTMDVSTTDYSSSTEDISFTEDVSFTEDDSFTEYSSFTKYSSFTKYSSSVSSFTKVIWSTLETSSIKGIAATTSSYFTNAQTTSGTANDSSISKPSGSQIFVLCVISVVGFIFFFLFFLSLFV</sequence>
<dbReference type="EMBL" id="CP017626">
    <property type="protein sequence ID" value="AOW29356.1"/>
    <property type="molecule type" value="Genomic_DNA"/>
</dbReference>
<dbReference type="RefSeq" id="XP_715562.2">
    <property type="nucleotide sequence ID" value="XM_710469.2"/>
</dbReference>
<dbReference type="STRING" id="237561.Q5A1B2"/>
<dbReference type="GlyCosmos" id="Q5A1B2">
    <property type="glycosylation" value="1 site, No reported glycans"/>
</dbReference>
<dbReference type="EnsemblFungi" id="C4_06300C_A-T">
    <property type="protein sequence ID" value="C4_06300C_A-T-p1"/>
    <property type="gene ID" value="C4_06300C_A"/>
</dbReference>
<dbReference type="GeneID" id="3642801"/>
<dbReference type="KEGG" id="cal:CAALFM_C406300CA"/>
<dbReference type="CGD" id="CAL0000192200">
    <property type="gene designation" value="PGA42"/>
</dbReference>
<dbReference type="VEuPathDB" id="FungiDB:C4_06300C_A"/>
<dbReference type="HOGENOM" id="CLU_1189771_0_0_1"/>
<dbReference type="InParanoid" id="Q5A1B2"/>
<dbReference type="OrthoDB" id="10425600at2759"/>
<dbReference type="PRO" id="PR:Q5A1B2"/>
<dbReference type="Proteomes" id="UP000000559">
    <property type="component" value="Chromosome 4"/>
</dbReference>
<dbReference type="GO" id="GO:0005576">
    <property type="term" value="C:extracellular region"/>
    <property type="evidence" value="ECO:0007669"/>
    <property type="project" value="UniProtKB-KW"/>
</dbReference>
<dbReference type="GO" id="GO:0098552">
    <property type="term" value="C:side of membrane"/>
    <property type="evidence" value="ECO:0007669"/>
    <property type="project" value="UniProtKB-KW"/>
</dbReference>
<proteinExistence type="evidence at protein level"/>
<protein>
    <recommendedName>
        <fullName>Probable cell wall protein PGA42</fullName>
    </recommendedName>
    <alternativeName>
        <fullName>Predicted GPI-anchored protein 42</fullName>
    </alternativeName>
</protein>
<comment type="function">
    <text evidence="1">Probable GPI-anchored cell wall protein that may be involved in cell wall organization, hyphal growth, as well as in virulence.</text>
</comment>
<comment type="subcellular location">
    <subcellularLocation>
        <location evidence="1">Secreted</location>
        <location evidence="1">Cell wall</location>
    </subcellularLocation>
    <subcellularLocation>
        <location evidence="5">Membrane</location>
        <topology evidence="5">Lipid-anchor</topology>
        <topology evidence="5">GPI-anchor</topology>
    </subcellularLocation>
</comment>
<comment type="induction">
    <text evidence="4">Up-regulated upon milbemycin A3 oxim derivative (A3Ox) treatment.</text>
</comment>
<comment type="PTM">
    <text evidence="1">The GPI-anchor is attached to the protein in the endoplasmic reticulum and serves to target the protein to the cell surface. There, the glucosamine-inositol phospholipid moiety is cleaved off and the GPI-modified mannoprotein is covalently attached via its lipidless GPI glycan remnant to the 1,6-beta-glucan of the outer cell wall layer (By similarity).</text>
</comment>
<comment type="similarity">
    <text evidence="5">Belongs to the IHD1 family.</text>
</comment>
<feature type="signal peptide" evidence="2">
    <location>
        <begin position="1"/>
        <end position="16"/>
    </location>
</feature>
<feature type="chain" id="PRO_0000424741" description="Probable cell wall protein PGA42">
    <location>
        <begin position="17"/>
        <end position="200"/>
    </location>
</feature>
<feature type="propeptide" id="PRO_0000424742" description="Removed in mature form" evidence="2">
    <location>
        <begin position="201"/>
        <end position="227"/>
    </location>
</feature>
<feature type="lipid moiety-binding region" description="GPI-anchor amidated serine" evidence="2">
    <location>
        <position position="200"/>
    </location>
</feature>
<feature type="glycosylation site" description="N-linked (GlcNAc...) asparagine" evidence="3">
    <location>
        <position position="192"/>
    </location>
</feature>
<reference key="1">
    <citation type="journal article" date="2004" name="Proc. Natl. Acad. Sci. U.S.A.">
        <title>The diploid genome sequence of Candida albicans.</title>
        <authorList>
            <person name="Jones T."/>
            <person name="Federspiel N.A."/>
            <person name="Chibana H."/>
            <person name="Dungan J."/>
            <person name="Kalman S."/>
            <person name="Magee B.B."/>
            <person name="Newport G."/>
            <person name="Thorstenson Y.R."/>
            <person name="Agabian N."/>
            <person name="Magee P.T."/>
            <person name="Davis R.W."/>
            <person name="Scherer S."/>
        </authorList>
    </citation>
    <scope>NUCLEOTIDE SEQUENCE [LARGE SCALE GENOMIC DNA]</scope>
    <source>
        <strain>SC5314 / ATCC MYA-2876</strain>
    </source>
</reference>
<reference key="2">
    <citation type="journal article" date="2007" name="Genome Biol.">
        <title>Assembly of the Candida albicans genome into sixteen supercontigs aligned on the eight chromosomes.</title>
        <authorList>
            <person name="van het Hoog M."/>
            <person name="Rast T.J."/>
            <person name="Martchenko M."/>
            <person name="Grindle S."/>
            <person name="Dignard D."/>
            <person name="Hogues H."/>
            <person name="Cuomo C."/>
            <person name="Berriman M."/>
            <person name="Scherer S."/>
            <person name="Magee B.B."/>
            <person name="Whiteway M."/>
            <person name="Chibana H."/>
            <person name="Nantel A."/>
            <person name="Magee P.T."/>
        </authorList>
    </citation>
    <scope>GENOME REANNOTATION</scope>
    <source>
        <strain>SC5314 / ATCC MYA-2876</strain>
    </source>
</reference>
<reference key="3">
    <citation type="journal article" date="2013" name="Genome Biol.">
        <title>Assembly of a phased diploid Candida albicans genome facilitates allele-specific measurements and provides a simple model for repeat and indel structure.</title>
        <authorList>
            <person name="Muzzey D."/>
            <person name="Schwartz K."/>
            <person name="Weissman J.S."/>
            <person name="Sherlock G."/>
        </authorList>
    </citation>
    <scope>NUCLEOTIDE SEQUENCE [LARGE SCALE GENOMIC DNA]</scope>
    <scope>GENOME REANNOTATION</scope>
    <source>
        <strain>SC5314 / ATCC MYA-2876</strain>
    </source>
</reference>
<reference key="4">
    <citation type="journal article" date="2003" name="Yeast">
        <title>Genome-wide identification of fungal GPI proteins.</title>
        <authorList>
            <person name="De Groot P.W."/>
            <person name="Hellingwerf K.J."/>
            <person name="Klis F.M."/>
        </authorList>
    </citation>
    <scope>PREDICTION OF GPI-ANCHOR</scope>
</reference>
<reference key="5">
    <citation type="journal article" date="2013" name="Antimicrob. Agents Chemother.">
        <title>Milbemycins: more than efflux inhibitors for fungal pathogens.</title>
        <authorList>
            <person name="Silva L.V."/>
            <person name="Sanguinetti M."/>
            <person name="Vandeputte P."/>
            <person name="Torelli R."/>
            <person name="Rochat B."/>
            <person name="Sanglard D."/>
        </authorList>
    </citation>
    <scope>INDUCTION</scope>
</reference>
<name>PGA42_CANAL</name>
<keyword id="KW-0134">Cell wall</keyword>
<keyword id="KW-0325">Glycoprotein</keyword>
<keyword id="KW-0336">GPI-anchor</keyword>
<keyword id="KW-0449">Lipoprotein</keyword>
<keyword id="KW-0472">Membrane</keyword>
<keyword id="KW-1185">Reference proteome</keyword>
<keyword id="KW-0964">Secreted</keyword>
<keyword id="KW-0732">Signal</keyword>
<keyword id="KW-0843">Virulence</keyword>
<accession>Q5A1B2</accession>
<accession>A0A1D8PMI8</accession>
<accession>Q5A1H0</accession>
<evidence type="ECO:0000250" key="1"/>
<evidence type="ECO:0000255" key="2"/>
<evidence type="ECO:0000255" key="3">
    <source>
        <dbReference type="PROSITE-ProRule" id="PRU00498"/>
    </source>
</evidence>
<evidence type="ECO:0000269" key="4">
    <source>
    </source>
</evidence>
<evidence type="ECO:0000305" key="5"/>